<reference key="1">
    <citation type="journal article" date="2005" name="Nature">
        <title>The genome of the social amoeba Dictyostelium discoideum.</title>
        <authorList>
            <person name="Eichinger L."/>
            <person name="Pachebat J.A."/>
            <person name="Gloeckner G."/>
            <person name="Rajandream M.A."/>
            <person name="Sucgang R."/>
            <person name="Berriman M."/>
            <person name="Song J."/>
            <person name="Olsen R."/>
            <person name="Szafranski K."/>
            <person name="Xu Q."/>
            <person name="Tunggal B."/>
            <person name="Kummerfeld S."/>
            <person name="Madera M."/>
            <person name="Konfortov B.A."/>
            <person name="Rivero F."/>
            <person name="Bankier A.T."/>
            <person name="Lehmann R."/>
            <person name="Hamlin N."/>
            <person name="Davies R."/>
            <person name="Gaudet P."/>
            <person name="Fey P."/>
            <person name="Pilcher K."/>
            <person name="Chen G."/>
            <person name="Saunders D."/>
            <person name="Sodergren E.J."/>
            <person name="Davis P."/>
            <person name="Kerhornou A."/>
            <person name="Nie X."/>
            <person name="Hall N."/>
            <person name="Anjard C."/>
            <person name="Hemphill L."/>
            <person name="Bason N."/>
            <person name="Farbrother P."/>
            <person name="Desany B."/>
            <person name="Just E."/>
            <person name="Morio T."/>
            <person name="Rost R."/>
            <person name="Churcher C.M."/>
            <person name="Cooper J."/>
            <person name="Haydock S."/>
            <person name="van Driessche N."/>
            <person name="Cronin A."/>
            <person name="Goodhead I."/>
            <person name="Muzny D.M."/>
            <person name="Mourier T."/>
            <person name="Pain A."/>
            <person name="Lu M."/>
            <person name="Harper D."/>
            <person name="Lindsay R."/>
            <person name="Hauser H."/>
            <person name="James K.D."/>
            <person name="Quiles M."/>
            <person name="Madan Babu M."/>
            <person name="Saito T."/>
            <person name="Buchrieser C."/>
            <person name="Wardroper A."/>
            <person name="Felder M."/>
            <person name="Thangavelu M."/>
            <person name="Johnson D."/>
            <person name="Knights A."/>
            <person name="Loulseged H."/>
            <person name="Mungall K.L."/>
            <person name="Oliver K."/>
            <person name="Price C."/>
            <person name="Quail M.A."/>
            <person name="Urushihara H."/>
            <person name="Hernandez J."/>
            <person name="Rabbinowitsch E."/>
            <person name="Steffen D."/>
            <person name="Sanders M."/>
            <person name="Ma J."/>
            <person name="Kohara Y."/>
            <person name="Sharp S."/>
            <person name="Simmonds M.N."/>
            <person name="Spiegler S."/>
            <person name="Tivey A."/>
            <person name="Sugano S."/>
            <person name="White B."/>
            <person name="Walker D."/>
            <person name="Woodward J.R."/>
            <person name="Winckler T."/>
            <person name="Tanaka Y."/>
            <person name="Shaulsky G."/>
            <person name="Schleicher M."/>
            <person name="Weinstock G.M."/>
            <person name="Rosenthal A."/>
            <person name="Cox E.C."/>
            <person name="Chisholm R.L."/>
            <person name="Gibbs R.A."/>
            <person name="Loomis W.F."/>
            <person name="Platzer M."/>
            <person name="Kay R.R."/>
            <person name="Williams J.G."/>
            <person name="Dear P.H."/>
            <person name="Noegel A.A."/>
            <person name="Barrell B.G."/>
            <person name="Kuspa A."/>
        </authorList>
    </citation>
    <scope>NUCLEOTIDE SEQUENCE [LARGE SCALE GENOMIC DNA]</scope>
    <source>
        <strain>AX4</strain>
    </source>
</reference>
<comment type="function">
    <text evidence="1">Component of the Mediator complex, a coactivator involved in the regulated transcription of nearly all RNA polymerase II-dependent genes. Mediator functions as a bridge to convey information from gene-specific regulatory proteins to the basal RNA polymerase II transcription machinery. Mediator is recruited to promoters by direct interactions with regulatory proteins and serves as a scaffold for the assembly of a functional preinitiation complex with RNA polymerase II and the general transcription factors (By similarity).</text>
</comment>
<comment type="subunit">
    <text evidence="1">Component of the Mediator complex.</text>
</comment>
<comment type="subcellular location">
    <subcellularLocation>
        <location evidence="1">Nucleus</location>
    </subcellularLocation>
</comment>
<comment type="similarity">
    <text evidence="3">Belongs to the Mediator complex subunit 31 family.</text>
</comment>
<dbReference type="EMBL" id="AAFI02000076">
    <property type="protein sequence ID" value="EAL64822.1"/>
    <property type="molecule type" value="Genomic_DNA"/>
</dbReference>
<dbReference type="RefSeq" id="XP_638330.1">
    <property type="nucleotide sequence ID" value="XM_633238.1"/>
</dbReference>
<dbReference type="SMR" id="Q54NI7"/>
<dbReference type="FunCoup" id="Q54NI7">
    <property type="interactions" value="293"/>
</dbReference>
<dbReference type="STRING" id="44689.Q54NI7"/>
<dbReference type="PaxDb" id="44689-DDB0266952"/>
<dbReference type="EnsemblProtists" id="EAL64822">
    <property type="protein sequence ID" value="EAL64822"/>
    <property type="gene ID" value="DDB_G0285221"/>
</dbReference>
<dbReference type="GeneID" id="8625000"/>
<dbReference type="KEGG" id="ddi:DDB_G0285221"/>
<dbReference type="dictyBase" id="DDB_G0285221">
    <property type="gene designation" value="med31"/>
</dbReference>
<dbReference type="VEuPathDB" id="AmoebaDB:DDB_G0285221"/>
<dbReference type="eggNOG" id="KOG4086">
    <property type="taxonomic scope" value="Eukaryota"/>
</dbReference>
<dbReference type="HOGENOM" id="CLU_071681_5_1_1"/>
<dbReference type="InParanoid" id="Q54NI7"/>
<dbReference type="OMA" id="ILAQRNC"/>
<dbReference type="PhylomeDB" id="Q54NI7"/>
<dbReference type="PRO" id="PR:Q54NI7"/>
<dbReference type="Proteomes" id="UP000002195">
    <property type="component" value="Chromosome 4"/>
</dbReference>
<dbReference type="GO" id="GO:0070847">
    <property type="term" value="C:core mediator complex"/>
    <property type="evidence" value="ECO:0000318"/>
    <property type="project" value="GO_Central"/>
</dbReference>
<dbReference type="GO" id="GO:0016592">
    <property type="term" value="C:mediator complex"/>
    <property type="evidence" value="ECO:0000250"/>
    <property type="project" value="dictyBase"/>
</dbReference>
<dbReference type="GO" id="GO:0003713">
    <property type="term" value="F:transcription coactivator activity"/>
    <property type="evidence" value="ECO:0000250"/>
    <property type="project" value="dictyBase"/>
</dbReference>
<dbReference type="GO" id="GO:0006357">
    <property type="term" value="P:regulation of transcription by RNA polymerase II"/>
    <property type="evidence" value="ECO:0000250"/>
    <property type="project" value="dictyBase"/>
</dbReference>
<dbReference type="FunFam" id="1.10.10.1340:FF:000001">
    <property type="entry name" value="Mediator of RNA polymerase II transcription subunit 31"/>
    <property type="match status" value="1"/>
</dbReference>
<dbReference type="Gene3D" id="1.10.10.1340">
    <property type="entry name" value="Mediator of RNA polymerase II, submodule Med31 (Soh1)"/>
    <property type="match status" value="1"/>
</dbReference>
<dbReference type="InterPro" id="IPR038089">
    <property type="entry name" value="Med31_sf"/>
</dbReference>
<dbReference type="InterPro" id="IPR008831">
    <property type="entry name" value="Mediator_Med31"/>
</dbReference>
<dbReference type="PANTHER" id="PTHR13186">
    <property type="entry name" value="MEDIATOR OF RNA POLYMERASE II TRANSCRIPTION SUBUNIT 31"/>
    <property type="match status" value="1"/>
</dbReference>
<dbReference type="Pfam" id="PF05669">
    <property type="entry name" value="Med31"/>
    <property type="match status" value="1"/>
</dbReference>
<keyword id="KW-0010">Activator</keyword>
<keyword id="KW-0539">Nucleus</keyword>
<keyword id="KW-1185">Reference proteome</keyword>
<keyword id="KW-0804">Transcription</keyword>
<keyword id="KW-0805">Transcription regulation</keyword>
<proteinExistence type="inferred from homology"/>
<organism>
    <name type="scientific">Dictyostelium discoideum</name>
    <name type="common">Social amoeba</name>
    <dbReference type="NCBI Taxonomy" id="44689"/>
    <lineage>
        <taxon>Eukaryota</taxon>
        <taxon>Amoebozoa</taxon>
        <taxon>Evosea</taxon>
        <taxon>Eumycetozoa</taxon>
        <taxon>Dictyostelia</taxon>
        <taxon>Dictyosteliales</taxon>
        <taxon>Dictyosteliaceae</taxon>
        <taxon>Dictyostelium</taxon>
    </lineage>
</organism>
<feature type="chain" id="PRO_0000388663" description="Putative mediator of RNA polymerase II transcription subunit 31">
    <location>
        <begin position="1"/>
        <end position="176"/>
    </location>
</feature>
<feature type="region of interest" description="Disordered" evidence="2">
    <location>
        <begin position="1"/>
        <end position="38"/>
    </location>
</feature>
<feature type="compositionally biased region" description="Low complexity" evidence="2">
    <location>
        <begin position="7"/>
        <end position="30"/>
    </location>
</feature>
<protein>
    <recommendedName>
        <fullName>Putative mediator of RNA polymerase II transcription subunit 31</fullName>
    </recommendedName>
    <alternativeName>
        <fullName>Putative mediator complex subunit 31</fullName>
    </alternativeName>
</protein>
<gene>
    <name type="primary">med31</name>
    <name type="ORF">DDB_G0285221</name>
</gene>
<evidence type="ECO:0000250" key="1"/>
<evidence type="ECO:0000256" key="2">
    <source>
        <dbReference type="SAM" id="MobiDB-lite"/>
    </source>
</evidence>
<evidence type="ECO:0000305" key="3"/>
<accession>Q54NI7</accession>
<name>MED31_DICDI</name>
<sequence>MSSSSPINENDNGNIENNNETNITENGDNGESIDKKDDNIVLPYENDEEEANYLRFIMELEFIQCLSNPRYLNYLAQNRYFQDKAFVNYLVYLQYWKKPEYAKFIVYPQSLYFLDLLQEERFRQELNHSQSTDFIHEQQFYHWQYYRNNRMSIKEQELQQQQQQQQQQQVQPPTTV</sequence>